<sequence length="6" mass="699">ILPNDK</sequence>
<keyword id="KW-0204">Cytolysis</keyword>
<keyword id="KW-0903">Direct protein sequencing</keyword>
<keyword id="KW-0964">Secreted</keyword>
<dbReference type="GO" id="GO:0005576">
    <property type="term" value="C:extracellular region"/>
    <property type="evidence" value="ECO:0007669"/>
    <property type="project" value="UniProtKB-SubCell"/>
</dbReference>
<dbReference type="GO" id="GO:0031640">
    <property type="term" value="P:killing of cells of another organism"/>
    <property type="evidence" value="ECO:0007669"/>
    <property type="project" value="UniProtKB-KW"/>
</dbReference>
<evidence type="ECO:0000269" key="1">
    <source>
    </source>
</evidence>
<evidence type="ECO:0000303" key="2">
    <source>
    </source>
</evidence>
<evidence type="ECO:0000305" key="3">
    <source>
    </source>
</evidence>
<proteinExistence type="evidence at protein level"/>
<comment type="function">
    <text evidence="1">Causes weak hemolysis. Does not cause mast cell degranulation, LDH release, and does not have antimicrobial activity. Does not cause edema and pain.</text>
</comment>
<comment type="subcellular location">
    <subcellularLocation>
        <location evidence="1">Secreted</location>
    </subcellularLocation>
</comment>
<comment type="tissue specificity">
    <text evidence="3">Expressed by the venom gland.</text>
</comment>
<comment type="mass spectrometry" mass="699.3" method="Electrospray" evidence="1"/>
<name>CRY18_TITSE</name>
<accession>P0DRE5</accession>
<feature type="peptide" id="PRO_0000461735" description="Cryptide TyPep-18" evidence="1">
    <location>
        <begin position="1"/>
        <end position="6"/>
    </location>
</feature>
<organism>
    <name type="scientific">Tityus serrulatus</name>
    <name type="common">Brazilian scorpion</name>
    <dbReference type="NCBI Taxonomy" id="6887"/>
    <lineage>
        <taxon>Eukaryota</taxon>
        <taxon>Metazoa</taxon>
        <taxon>Ecdysozoa</taxon>
        <taxon>Arthropoda</taxon>
        <taxon>Chelicerata</taxon>
        <taxon>Arachnida</taxon>
        <taxon>Scorpiones</taxon>
        <taxon>Buthida</taxon>
        <taxon>Buthoidea</taxon>
        <taxon>Buthidae</taxon>
        <taxon>Tityus</taxon>
    </lineage>
</organism>
<protein>
    <recommendedName>
        <fullName evidence="2">Cryptide TyPep-18</fullName>
    </recommendedName>
</protein>
<reference key="1">
    <citation type="journal article" date="2024" name="J. Nat. Prod.">
        <title>Profiling the linear peptides of venom from the Brazilian scorpion Tityus serrulatus: structural and functional characterization.</title>
        <authorList>
            <person name="Dias N.B."/>
            <person name="de Souza B.M."/>
            <person name="Cid-Alda F."/>
            <person name="Dorce V.A.C."/>
            <person name="Cocchi F.K."/>
            <person name="Palma M.S."/>
        </authorList>
    </citation>
    <scope>PROTEIN SEQUENCE</scope>
    <scope>IDENTIFICATION BY MASS SPECTROMETRY</scope>
    <scope>MASS SPECTROMETRY</scope>
    <scope>SUBCELLULAR LOCATION</scope>
    <scope>SYNTHESIS</scope>
    <scope>FUNCTION</scope>
    <source>
        <tissue>Venom</tissue>
    </source>
</reference>